<proteinExistence type="evidence at protein level"/>
<comment type="function">
    <text evidence="1">Central component of the KaiABC oscillator complex, which constitutes the main circadian regulator in cyanobacteria. Complex composition changes during the circadian cycle to control KaiC phosphorylation. KaiA stimulates KaiC autophosphorylation, while KaiB sequesters KaiA, leading to KaiC autodephosphorylation. Clock output pathways impact the RpaA transcriptional regulator. KaiC enhances the autophosphorylation activity of SasA, which then transfers its phosphate group to RpaA to activate it. KaiB and KaiC together enhance the phospho-RpaA dephosphatase activity of CikA.</text>
</comment>
<comment type="function">
    <text evidence="1">Has a weak, temperature-independent ATPase activity; ATPase activity defines the circadian period. The phosphorylation state of KaiC modulates its ATPase activity and effects KaiB binding.</text>
</comment>
<comment type="catalytic activity">
    <reaction evidence="1">
        <text>L-seryl-[protein] + ATP = O-phospho-L-seryl-[protein] + ADP + H(+)</text>
        <dbReference type="Rhea" id="RHEA:17989"/>
        <dbReference type="Rhea" id="RHEA-COMP:9863"/>
        <dbReference type="Rhea" id="RHEA-COMP:11604"/>
        <dbReference type="ChEBI" id="CHEBI:15378"/>
        <dbReference type="ChEBI" id="CHEBI:29999"/>
        <dbReference type="ChEBI" id="CHEBI:30616"/>
        <dbReference type="ChEBI" id="CHEBI:83421"/>
        <dbReference type="ChEBI" id="CHEBI:456216"/>
        <dbReference type="EC" id="2.7.11.1"/>
    </reaction>
</comment>
<comment type="catalytic activity">
    <reaction evidence="1">
        <text>L-threonyl-[protein] + ATP = O-phospho-L-threonyl-[protein] + ADP + H(+)</text>
        <dbReference type="Rhea" id="RHEA:46608"/>
        <dbReference type="Rhea" id="RHEA-COMP:11060"/>
        <dbReference type="Rhea" id="RHEA-COMP:11605"/>
        <dbReference type="ChEBI" id="CHEBI:15378"/>
        <dbReference type="ChEBI" id="CHEBI:30013"/>
        <dbReference type="ChEBI" id="CHEBI:30616"/>
        <dbReference type="ChEBI" id="CHEBI:61977"/>
        <dbReference type="ChEBI" id="CHEBI:456216"/>
        <dbReference type="EC" id="2.7.11.1"/>
    </reaction>
</comment>
<comment type="catalytic activity">
    <reaction evidence="1">
        <text>ATP + H2O = ADP + phosphate + H(+)</text>
        <dbReference type="Rhea" id="RHEA:13065"/>
        <dbReference type="ChEBI" id="CHEBI:15377"/>
        <dbReference type="ChEBI" id="CHEBI:15378"/>
        <dbReference type="ChEBI" id="CHEBI:30616"/>
        <dbReference type="ChEBI" id="CHEBI:43474"/>
        <dbReference type="ChEBI" id="CHEBI:456216"/>
    </reaction>
</comment>
<comment type="cofactor">
    <cofactor evidence="1">
        <name>Mg(2+)</name>
        <dbReference type="ChEBI" id="CHEBI:18420"/>
    </cofactor>
    <text evidence="1">Binds 2 Mg(2+) ions per subunit, one in each domain. Mg(2+) is required for hexamerization and phosphatase activity.</text>
</comment>
<comment type="activity regulation">
    <text evidence="1">The interaction with KaiA enhances its phosphorylation status, while the interaction with KaiB decreases it.</text>
</comment>
<comment type="subunit">
    <text evidence="1">Homohexamer; hexamerization is dependent on ATP-binding. The KaiABC complex composition changes during the circadian cycle to control KaiC phosphorylation. Complexes KaiC(6), KaiA(2-4):KaiC(6), KaiB(6):KaiC(6) and KaiC(6):KaiB(6):KaiA(12) are among the most important forms, many form cooperatively. KaiC interacts with SasA, activating its autokinase function and leading to RpaA activation.</text>
</comment>
<comment type="interaction">
    <interactant intactId="EBI-934214">
        <id>Q6L8J9</id>
    </interactant>
    <interactant intactId="EBI-934195">
        <id>Q6L8K1</id>
        <label>kaiA</label>
    </interactant>
    <organismsDiffer>false</organismsDiffer>
    <experiments>2</experiments>
</comment>
<comment type="interaction">
    <interactant intactId="EBI-934214">
        <id>Q6L8J9</id>
    </interactant>
    <interactant intactId="EBI-934214">
        <id>Q6L8J9</id>
        <label>kaiC</label>
    </interactant>
    <organismsDiffer>false</organismsDiffer>
    <experiments>2</experiments>
</comment>
<comment type="domain">
    <text evidence="1">In the homohexamer the 2 domains (called CI and CII) self-associate to each form a 'donut' layer; the compactness and local conformation of the domains varies over the cell cycle and impacts function. CII has the autokinase and autophosphatase activities, both CI and CII have (weak) ATPase activity; CI has the clock pacemaker role.</text>
</comment>
<comment type="PTM">
    <text evidence="1">Phosphorylated on serine and threonine residues by autocatalysis. Has a 4 step phosphorylation cycle; the autokinase acts first on Thr-432, then Ser-431. When Ser-431 is modified KaiC switches to an autophosphatase mode, acting first on phospho-Thr-432 then phospho-Ser-431.</text>
</comment>
<comment type="similarity">
    <text evidence="1">Belongs to the KaiC family.</text>
</comment>
<gene>
    <name evidence="1" type="primary">kaiC</name>
</gene>
<feature type="chain" id="PRO_0000217785" description="Circadian clock oscillator protein KaiC">
    <location>
        <begin position="1"/>
        <end position="518"/>
    </location>
</feature>
<feature type="domain" description="KaiC 1" evidence="1">
    <location>
        <begin position="1"/>
        <end position="247"/>
    </location>
</feature>
<feature type="domain" description="KaiC 2" evidence="1">
    <location>
        <begin position="261"/>
        <end position="518"/>
    </location>
</feature>
<feature type="binding site" evidence="1">
    <location>
        <position position="50"/>
    </location>
    <ligand>
        <name>ATP</name>
        <dbReference type="ChEBI" id="CHEBI:30616"/>
        <label>1</label>
        <note>ligand shared between homodimeric partners</note>
    </ligand>
</feature>
<feature type="binding site" evidence="1">
    <location>
        <position position="51"/>
    </location>
    <ligand>
        <name>ATP</name>
        <dbReference type="ChEBI" id="CHEBI:30616"/>
        <label>1</label>
        <note>ligand shared between homodimeric partners</note>
    </ligand>
</feature>
<feature type="binding site" evidence="1">
    <location>
        <position position="52"/>
    </location>
    <ligand>
        <name>ATP</name>
        <dbReference type="ChEBI" id="CHEBI:30616"/>
        <label>1</label>
        <note>ligand shared between homodimeric partners</note>
    </ligand>
</feature>
<feature type="binding site" evidence="1">
    <location>
        <position position="53"/>
    </location>
    <ligand>
        <name>ATP</name>
        <dbReference type="ChEBI" id="CHEBI:30616"/>
        <label>1</label>
        <note>ligand shared between homodimeric partners</note>
    </ligand>
</feature>
<feature type="binding site" evidence="1">
    <location>
        <position position="54"/>
    </location>
    <ligand>
        <name>ATP</name>
        <dbReference type="ChEBI" id="CHEBI:30616"/>
        <label>1</label>
        <note>ligand shared between homodimeric partners</note>
    </ligand>
</feature>
<feature type="binding site" evidence="1">
    <location>
        <position position="54"/>
    </location>
    <ligand>
        <name>Mg(2+)</name>
        <dbReference type="ChEBI" id="CHEBI:18420"/>
        <label>1</label>
    </ligand>
</feature>
<feature type="binding site" evidence="1">
    <location>
        <position position="55"/>
    </location>
    <ligand>
        <name>ATP</name>
        <dbReference type="ChEBI" id="CHEBI:30616"/>
        <label>1</label>
        <note>ligand shared between homodimeric partners</note>
    </ligand>
</feature>
<feature type="binding site" evidence="1">
    <location>
        <position position="90"/>
    </location>
    <ligand>
        <name>ATP</name>
        <dbReference type="ChEBI" id="CHEBI:30616"/>
        <label>1</label>
        <note>ligand shared between homodimeric partners</note>
    </ligand>
</feature>
<feature type="binding site" evidence="1">
    <location>
        <position position="225"/>
    </location>
    <ligand>
        <name>ATP</name>
        <dbReference type="ChEBI" id="CHEBI:30616"/>
        <label>1</label>
        <note>ligand shared between homodimeric partners</note>
    </ligand>
</feature>
<feature type="binding site" evidence="1">
    <location>
        <position position="226"/>
    </location>
    <ligand>
        <name>ATP</name>
        <dbReference type="ChEBI" id="CHEBI:30616"/>
        <label>1</label>
        <note>ligand shared between homodimeric partners</note>
    </ligand>
</feature>
<feature type="binding site" evidence="1">
    <location>
        <position position="227"/>
    </location>
    <ligand>
        <name>ATP</name>
        <dbReference type="ChEBI" id="CHEBI:30616"/>
        <label>1</label>
        <note>ligand shared between homodimeric partners</note>
    </ligand>
</feature>
<feature type="binding site" evidence="1">
    <location>
        <position position="229"/>
    </location>
    <ligand>
        <name>ATP</name>
        <dbReference type="ChEBI" id="CHEBI:30616"/>
        <label>1</label>
        <note>ligand shared between homodimeric partners</note>
    </ligand>
</feature>
<feature type="binding site" evidence="1">
    <location>
        <position position="231"/>
    </location>
    <ligand>
        <name>ATP</name>
        <dbReference type="ChEBI" id="CHEBI:30616"/>
        <label>1</label>
        <note>ligand shared between homodimeric partners</note>
    </ligand>
</feature>
<feature type="binding site" evidence="1">
    <location>
        <position position="290"/>
    </location>
    <ligand>
        <name>ATP</name>
        <dbReference type="ChEBI" id="CHEBI:30616"/>
        <label>2</label>
        <note>ligand shared between homodimeric partners</note>
    </ligand>
</feature>
<feature type="binding site" evidence="1">
    <location>
        <position position="291"/>
    </location>
    <ligand>
        <name>ATP</name>
        <dbReference type="ChEBI" id="CHEBI:30616"/>
        <label>2</label>
        <note>ligand shared between homodimeric partners</note>
    </ligand>
</feature>
<feature type="binding site" evidence="1">
    <location>
        <position position="292"/>
    </location>
    <ligand>
        <name>ATP</name>
        <dbReference type="ChEBI" id="CHEBI:30616"/>
        <label>2</label>
        <note>ligand shared between homodimeric partners</note>
    </ligand>
</feature>
<feature type="binding site" evidence="1">
    <location>
        <position position="293"/>
    </location>
    <ligand>
        <name>ATP</name>
        <dbReference type="ChEBI" id="CHEBI:30616"/>
        <label>2</label>
        <note>ligand shared between homodimeric partners</note>
    </ligand>
</feature>
<feature type="binding site" evidence="1">
    <location>
        <position position="294"/>
    </location>
    <ligand>
        <name>ATP</name>
        <dbReference type="ChEBI" id="CHEBI:30616"/>
        <label>2</label>
        <note>ligand shared between homodimeric partners</note>
    </ligand>
</feature>
<feature type="binding site" evidence="1">
    <location>
        <position position="295"/>
    </location>
    <ligand>
        <name>ATP</name>
        <dbReference type="ChEBI" id="CHEBI:30616"/>
        <label>2</label>
        <note>ligand shared between homodimeric partners</note>
    </ligand>
</feature>
<feature type="binding site" evidence="1">
    <location>
        <position position="295"/>
    </location>
    <ligand>
        <name>Mg(2+)</name>
        <dbReference type="ChEBI" id="CHEBI:18420"/>
        <label>2</label>
    </ligand>
</feature>
<feature type="binding site" evidence="1">
    <location>
        <position position="296"/>
    </location>
    <ligand>
        <name>ATP</name>
        <dbReference type="ChEBI" id="CHEBI:30616"/>
        <label>2</label>
        <note>ligand shared between homodimeric partners</note>
    </ligand>
</feature>
<feature type="binding site" evidence="1">
    <location>
        <position position="318"/>
    </location>
    <ligand>
        <name>Mg(2+)</name>
        <dbReference type="ChEBI" id="CHEBI:18420"/>
        <label>2</label>
    </ligand>
</feature>
<feature type="binding site" evidence="1">
    <location>
        <position position="331"/>
    </location>
    <ligand>
        <name>ATP</name>
        <dbReference type="ChEBI" id="CHEBI:30616"/>
        <label>2</label>
        <note>ligand shared between homodimeric partners</note>
    </ligand>
</feature>
<feature type="binding site" evidence="1">
    <location>
        <position position="451"/>
    </location>
    <ligand>
        <name>ATP</name>
        <dbReference type="ChEBI" id="CHEBI:30616"/>
        <label>2</label>
        <note>ligand shared between homodimeric partners</note>
    </ligand>
</feature>
<feature type="binding site" evidence="1">
    <location>
        <position position="457"/>
    </location>
    <ligand>
        <name>ATP</name>
        <dbReference type="ChEBI" id="CHEBI:30616"/>
        <label>2</label>
        <note>ligand shared between homodimeric partners</note>
    </ligand>
</feature>
<feature type="binding site" evidence="1">
    <location>
        <position position="458"/>
    </location>
    <ligand>
        <name>ATP</name>
        <dbReference type="ChEBI" id="CHEBI:30616"/>
        <label>2</label>
        <note>ligand shared between homodimeric partners</note>
    </ligand>
</feature>
<feature type="binding site" evidence="1">
    <location>
        <position position="459"/>
    </location>
    <ligand>
        <name>ATP</name>
        <dbReference type="ChEBI" id="CHEBI:30616"/>
        <label>2</label>
        <note>ligand shared between homodimeric partners</note>
    </ligand>
</feature>
<feature type="binding site" evidence="1">
    <location>
        <position position="461"/>
    </location>
    <ligand>
        <name>ATP</name>
        <dbReference type="ChEBI" id="CHEBI:30616"/>
        <label>2</label>
        <note>ligand shared between homodimeric partners</note>
    </ligand>
</feature>
<feature type="binding site" evidence="1">
    <location>
        <position position="463"/>
    </location>
    <ligand>
        <name>ATP</name>
        <dbReference type="ChEBI" id="CHEBI:30616"/>
        <label>2</label>
        <note>ligand shared between homodimeric partners</note>
    </ligand>
</feature>
<feature type="binding site" evidence="1">
    <location>
        <position position="465"/>
    </location>
    <ligand>
        <name>ATP</name>
        <dbReference type="ChEBI" id="CHEBI:30616"/>
        <label>2</label>
        <note>ligand shared between homodimeric partners</note>
    </ligand>
</feature>
<feature type="modified residue" description="Phosphoserine; by autocatalysis" evidence="1">
    <location>
        <position position="431"/>
    </location>
</feature>
<feature type="modified residue" description="Phosphothreonine; by autocatalysis" evidence="1">
    <location>
        <position position="432"/>
    </location>
</feature>
<protein>
    <recommendedName>
        <fullName evidence="1">Circadian clock oscillator protein KaiC</fullName>
        <ecNumber evidence="1">2.7.11.1</ecNumber>
        <ecNumber evidence="1">3.6.4.-</ecNumber>
    </recommendedName>
</protein>
<organism>
    <name type="scientific">Thermostichus vulcanus</name>
    <name type="common">Synechococcus vulcanus</name>
    <dbReference type="NCBI Taxonomy" id="32053"/>
    <lineage>
        <taxon>Bacteria</taxon>
        <taxon>Bacillati</taxon>
        <taxon>Cyanobacteriota</taxon>
        <taxon>Cyanophyceae</taxon>
        <taxon>Thermostichales</taxon>
        <taxon>Thermostichaceae</taxon>
        <taxon>Thermostichus</taxon>
    </lineage>
</organism>
<dbReference type="EC" id="2.7.11.1" evidence="1"/>
<dbReference type="EC" id="3.6.4.-" evidence="1"/>
<dbReference type="EMBL" id="AB121971">
    <property type="protein sequence ID" value="BAD21223.1"/>
    <property type="molecule type" value="Genomic_DNA"/>
</dbReference>
<dbReference type="SMR" id="Q6L8J9"/>
<dbReference type="IntAct" id="Q6L8J9">
    <property type="interactions" value="1"/>
</dbReference>
<dbReference type="MINT" id="Q6L8J9"/>
<dbReference type="GO" id="GO:0005524">
    <property type="term" value="F:ATP binding"/>
    <property type="evidence" value="ECO:0007669"/>
    <property type="project" value="UniProtKB-UniRule"/>
</dbReference>
<dbReference type="GO" id="GO:0016887">
    <property type="term" value="F:ATP hydrolysis activity"/>
    <property type="evidence" value="ECO:0007669"/>
    <property type="project" value="RHEA"/>
</dbReference>
<dbReference type="GO" id="GO:0003677">
    <property type="term" value="F:DNA binding"/>
    <property type="evidence" value="ECO:0007669"/>
    <property type="project" value="InterPro"/>
</dbReference>
<dbReference type="GO" id="GO:0042802">
    <property type="term" value="F:identical protein binding"/>
    <property type="evidence" value="ECO:0000353"/>
    <property type="project" value="IntAct"/>
</dbReference>
<dbReference type="GO" id="GO:0000287">
    <property type="term" value="F:magnesium ion binding"/>
    <property type="evidence" value="ECO:0007669"/>
    <property type="project" value="UniProtKB-UniRule"/>
</dbReference>
<dbReference type="GO" id="GO:0106310">
    <property type="term" value="F:protein serine kinase activity"/>
    <property type="evidence" value="ECO:0007669"/>
    <property type="project" value="RHEA"/>
</dbReference>
<dbReference type="GO" id="GO:0004674">
    <property type="term" value="F:protein serine/threonine kinase activity"/>
    <property type="evidence" value="ECO:0007669"/>
    <property type="project" value="UniProtKB-KW"/>
</dbReference>
<dbReference type="GO" id="GO:0004712">
    <property type="term" value="F:protein serine/threonine/tyrosine kinase activity"/>
    <property type="evidence" value="ECO:0007669"/>
    <property type="project" value="UniProtKB-UniRule"/>
</dbReference>
<dbReference type="GO" id="GO:0007623">
    <property type="term" value="P:circadian rhythm"/>
    <property type="evidence" value="ECO:0007669"/>
    <property type="project" value="UniProtKB-UniRule"/>
</dbReference>
<dbReference type="GO" id="GO:0042752">
    <property type="term" value="P:regulation of circadian rhythm"/>
    <property type="evidence" value="ECO:0007669"/>
    <property type="project" value="InterPro"/>
</dbReference>
<dbReference type="GO" id="GO:0006355">
    <property type="term" value="P:regulation of DNA-templated transcription"/>
    <property type="evidence" value="ECO:0007669"/>
    <property type="project" value="InterPro"/>
</dbReference>
<dbReference type="CDD" id="cd19485">
    <property type="entry name" value="KaiC-N"/>
    <property type="match status" value="1"/>
</dbReference>
<dbReference type="CDD" id="cd19484">
    <property type="entry name" value="KaiC_C"/>
    <property type="match status" value="1"/>
</dbReference>
<dbReference type="FunFam" id="3.40.50.300:FF:001364">
    <property type="entry name" value="Circadian clock protein kinase KaiC"/>
    <property type="match status" value="1"/>
</dbReference>
<dbReference type="Gene3D" id="3.40.50.300">
    <property type="entry name" value="P-loop containing nucleotide triphosphate hydrolases"/>
    <property type="match status" value="2"/>
</dbReference>
<dbReference type="HAMAP" id="MF_01836">
    <property type="entry name" value="KaiC"/>
    <property type="match status" value="1"/>
</dbReference>
<dbReference type="InterPro" id="IPR051347">
    <property type="entry name" value="Circadian_clock_KaiC-rel"/>
</dbReference>
<dbReference type="InterPro" id="IPR013503">
    <property type="entry name" value="Circadian_KaiC_bact"/>
</dbReference>
<dbReference type="InterPro" id="IPR030665">
    <property type="entry name" value="KaiC"/>
</dbReference>
<dbReference type="InterPro" id="IPR014774">
    <property type="entry name" value="KaiC-like_dom"/>
</dbReference>
<dbReference type="InterPro" id="IPR047222">
    <property type="entry name" value="KaiC_C"/>
</dbReference>
<dbReference type="InterPro" id="IPR010624">
    <property type="entry name" value="KaiC_dom"/>
</dbReference>
<dbReference type="InterPro" id="IPR047221">
    <property type="entry name" value="KaiC_N"/>
</dbReference>
<dbReference type="InterPro" id="IPR027417">
    <property type="entry name" value="P-loop_NTPase"/>
</dbReference>
<dbReference type="NCBIfam" id="TIGR02655">
    <property type="entry name" value="circ_KaiC"/>
    <property type="match status" value="1"/>
</dbReference>
<dbReference type="NCBIfam" id="NF006799">
    <property type="entry name" value="PRK09302.1"/>
    <property type="match status" value="1"/>
</dbReference>
<dbReference type="PANTHER" id="PTHR42926">
    <property type="match status" value="1"/>
</dbReference>
<dbReference type="PANTHER" id="PTHR42926:SF1">
    <property type="entry name" value="CIRCADIAN CLOCK OSCILLATOR PROTEIN KAIC 1"/>
    <property type="match status" value="1"/>
</dbReference>
<dbReference type="Pfam" id="PF06745">
    <property type="entry name" value="ATPase"/>
    <property type="match status" value="2"/>
</dbReference>
<dbReference type="PIRSF" id="PIRSF039117">
    <property type="entry name" value="KaiC"/>
    <property type="match status" value="1"/>
</dbReference>
<dbReference type="SUPFAM" id="SSF52540">
    <property type="entry name" value="P-loop containing nucleoside triphosphate hydrolases"/>
    <property type="match status" value="2"/>
</dbReference>
<dbReference type="PROSITE" id="PS51146">
    <property type="entry name" value="KAIC"/>
    <property type="match status" value="2"/>
</dbReference>
<name>KAIC_THEVL</name>
<reference key="1">
    <citation type="journal article" date="2004" name="Nat. Struct. Mol. Biol.">
        <title>Crystal structure of the C-terminal clock-oscillator domain of the cyanobacterial KaiA protein.</title>
        <authorList>
            <person name="Uzumaki T."/>
            <person name="Fujita M."/>
            <person name="Nakatsu T."/>
            <person name="Hayashi F."/>
            <person name="Shibata H."/>
            <person name="Itoh N."/>
            <person name="Kato H."/>
            <person name="Ishiura M."/>
        </authorList>
    </citation>
    <scope>NUCLEOTIDE SEQUENCE [GENOMIC DNA]</scope>
</reference>
<accession>Q6L8J9</accession>
<sequence>MTNLPEHQSSPTEQSSAEVKKIPTMIEGFDDISHGGLPQGRTTLVSGTSGTGKTLFAVQFLYNGITIFNEPGIFVTFEESPQDIIKNALSFGWNLQSLIDQGKLFILDASPDPDGQEVAGDFDLSALIERIQYAIRKYKATRVSIDSVTAVFQQYDAASVVRREIFRLAFRLKQLGVTTIMTTERVDEYGPVARFGVEEFVSDNVVILRNVLEGERRRRTVEILKLRGTTHMKGEYPFTINNGINIFPLGAMRLTQRSSNVRVSSGVKTLDEMCGGGFFKDSIILATGATGTGKTLLVSKFLETGCQQGERALLFAYEESRAQLSRNASSWGIDFEELERRGLLRIICAYPESAGLEDHLQIIKSEIADFKPSRVAIDSLSALARGVSNNAFRQFVIGVTGFAKQEEITGFFTNTTDQFMGSNSITESHISTITDTILLLQYVEIRGEMSRAINVFKMRGSWHDKGIREYVITEKGAEIRDSFRNFEGIISGTPTRISVDEKTELARIAKGMQDLESE</sequence>
<evidence type="ECO:0000255" key="1">
    <source>
        <dbReference type="HAMAP-Rule" id="MF_01836"/>
    </source>
</evidence>
<keyword id="KW-0067">ATP-binding</keyword>
<keyword id="KW-0090">Biological rhythms</keyword>
<keyword id="KW-0378">Hydrolase</keyword>
<keyword id="KW-0418">Kinase</keyword>
<keyword id="KW-0460">Magnesium</keyword>
<keyword id="KW-0479">Metal-binding</keyword>
<keyword id="KW-0547">Nucleotide-binding</keyword>
<keyword id="KW-0597">Phosphoprotein</keyword>
<keyword id="KW-0677">Repeat</keyword>
<keyword id="KW-0723">Serine/threonine-protein kinase</keyword>
<keyword id="KW-0804">Transcription</keyword>
<keyword id="KW-0805">Transcription regulation</keyword>
<keyword id="KW-0808">Transferase</keyword>